<name>LEXA_LEUCK</name>
<comment type="function">
    <text evidence="1">Represses a number of genes involved in the response to DNA damage (SOS response), including recA and lexA. In the presence of single-stranded DNA, RecA interacts with LexA causing an autocatalytic cleavage which disrupts the DNA-binding part of LexA, leading to derepression of the SOS regulon and eventually DNA repair.</text>
</comment>
<comment type="catalytic activity">
    <reaction evidence="1">
        <text>Hydrolysis of Ala-|-Gly bond in repressor LexA.</text>
        <dbReference type="EC" id="3.4.21.88"/>
    </reaction>
</comment>
<comment type="subunit">
    <text evidence="1">Homodimer.</text>
</comment>
<comment type="similarity">
    <text evidence="1">Belongs to the peptidase S24 family.</text>
</comment>
<dbReference type="EC" id="3.4.21.88" evidence="1"/>
<dbReference type="EMBL" id="DQ489736">
    <property type="protein sequence ID" value="ACA82822.1"/>
    <property type="molecule type" value="Genomic_DNA"/>
</dbReference>
<dbReference type="RefSeq" id="WP_004900722.1">
    <property type="nucleotide sequence ID" value="NC_010471.1"/>
</dbReference>
<dbReference type="SMR" id="B1MZ70"/>
<dbReference type="STRING" id="349519.LCK_00995"/>
<dbReference type="MEROPS" id="S24.001"/>
<dbReference type="GeneID" id="61102012"/>
<dbReference type="KEGG" id="lci:LCK_00995"/>
<dbReference type="eggNOG" id="COG1974">
    <property type="taxonomic scope" value="Bacteria"/>
</dbReference>
<dbReference type="HOGENOM" id="CLU_066192_45_1_9"/>
<dbReference type="OrthoDB" id="9802364at2"/>
<dbReference type="Proteomes" id="UP000002166">
    <property type="component" value="Chromosome"/>
</dbReference>
<dbReference type="GO" id="GO:0003677">
    <property type="term" value="F:DNA binding"/>
    <property type="evidence" value="ECO:0007669"/>
    <property type="project" value="UniProtKB-UniRule"/>
</dbReference>
<dbReference type="GO" id="GO:0004252">
    <property type="term" value="F:serine-type endopeptidase activity"/>
    <property type="evidence" value="ECO:0007669"/>
    <property type="project" value="UniProtKB-UniRule"/>
</dbReference>
<dbReference type="GO" id="GO:0006281">
    <property type="term" value="P:DNA repair"/>
    <property type="evidence" value="ECO:0007669"/>
    <property type="project" value="UniProtKB-UniRule"/>
</dbReference>
<dbReference type="GO" id="GO:0006260">
    <property type="term" value="P:DNA replication"/>
    <property type="evidence" value="ECO:0007669"/>
    <property type="project" value="UniProtKB-UniRule"/>
</dbReference>
<dbReference type="GO" id="GO:0045892">
    <property type="term" value="P:negative regulation of DNA-templated transcription"/>
    <property type="evidence" value="ECO:0007669"/>
    <property type="project" value="UniProtKB-UniRule"/>
</dbReference>
<dbReference type="GO" id="GO:0006508">
    <property type="term" value="P:proteolysis"/>
    <property type="evidence" value="ECO:0007669"/>
    <property type="project" value="InterPro"/>
</dbReference>
<dbReference type="GO" id="GO:0009432">
    <property type="term" value="P:SOS response"/>
    <property type="evidence" value="ECO:0007669"/>
    <property type="project" value="UniProtKB-UniRule"/>
</dbReference>
<dbReference type="CDD" id="cd06529">
    <property type="entry name" value="S24_LexA-like"/>
    <property type="match status" value="1"/>
</dbReference>
<dbReference type="FunFam" id="2.10.109.10:FF:000001">
    <property type="entry name" value="LexA repressor"/>
    <property type="match status" value="1"/>
</dbReference>
<dbReference type="Gene3D" id="2.10.109.10">
    <property type="entry name" value="Umud Fragment, subunit A"/>
    <property type="match status" value="1"/>
</dbReference>
<dbReference type="Gene3D" id="1.10.10.10">
    <property type="entry name" value="Winged helix-like DNA-binding domain superfamily/Winged helix DNA-binding domain"/>
    <property type="match status" value="1"/>
</dbReference>
<dbReference type="HAMAP" id="MF_00015">
    <property type="entry name" value="LexA"/>
    <property type="match status" value="1"/>
</dbReference>
<dbReference type="InterPro" id="IPR006200">
    <property type="entry name" value="LexA"/>
</dbReference>
<dbReference type="InterPro" id="IPR039418">
    <property type="entry name" value="LexA-like"/>
</dbReference>
<dbReference type="InterPro" id="IPR036286">
    <property type="entry name" value="LexA/Signal_pep-like_sf"/>
</dbReference>
<dbReference type="InterPro" id="IPR006199">
    <property type="entry name" value="LexA_DNA-bd_dom"/>
</dbReference>
<dbReference type="InterPro" id="IPR050077">
    <property type="entry name" value="LexA_repressor"/>
</dbReference>
<dbReference type="InterPro" id="IPR006197">
    <property type="entry name" value="Peptidase_S24_LexA"/>
</dbReference>
<dbReference type="InterPro" id="IPR015927">
    <property type="entry name" value="Peptidase_S24_S26A/B/C"/>
</dbReference>
<dbReference type="InterPro" id="IPR036388">
    <property type="entry name" value="WH-like_DNA-bd_sf"/>
</dbReference>
<dbReference type="InterPro" id="IPR036390">
    <property type="entry name" value="WH_DNA-bd_sf"/>
</dbReference>
<dbReference type="NCBIfam" id="TIGR00498">
    <property type="entry name" value="lexA"/>
    <property type="match status" value="1"/>
</dbReference>
<dbReference type="PANTHER" id="PTHR33516">
    <property type="entry name" value="LEXA REPRESSOR"/>
    <property type="match status" value="1"/>
</dbReference>
<dbReference type="PANTHER" id="PTHR33516:SF2">
    <property type="entry name" value="LEXA REPRESSOR-RELATED"/>
    <property type="match status" value="1"/>
</dbReference>
<dbReference type="Pfam" id="PF01726">
    <property type="entry name" value="LexA_DNA_bind"/>
    <property type="match status" value="1"/>
</dbReference>
<dbReference type="Pfam" id="PF00717">
    <property type="entry name" value="Peptidase_S24"/>
    <property type="match status" value="1"/>
</dbReference>
<dbReference type="PRINTS" id="PR00726">
    <property type="entry name" value="LEXASERPTASE"/>
</dbReference>
<dbReference type="SUPFAM" id="SSF51306">
    <property type="entry name" value="LexA/Signal peptidase"/>
    <property type="match status" value="1"/>
</dbReference>
<dbReference type="SUPFAM" id="SSF46785">
    <property type="entry name" value="Winged helix' DNA-binding domain"/>
    <property type="match status" value="1"/>
</dbReference>
<protein>
    <recommendedName>
        <fullName evidence="1">LexA repressor</fullName>
        <ecNumber evidence="1">3.4.21.88</ecNumber>
    </recommendedName>
</protein>
<feature type="chain" id="PRO_1000192771" description="LexA repressor">
    <location>
        <begin position="1"/>
        <end position="211"/>
    </location>
</feature>
<feature type="DNA-binding region" description="H-T-H motif" evidence="1">
    <location>
        <begin position="28"/>
        <end position="48"/>
    </location>
</feature>
<feature type="active site" description="For autocatalytic cleavage activity" evidence="1">
    <location>
        <position position="132"/>
    </location>
</feature>
<feature type="active site" description="For autocatalytic cleavage activity" evidence="1">
    <location>
        <position position="170"/>
    </location>
</feature>
<feature type="site" description="Cleavage; by autolysis" evidence="1">
    <location>
        <begin position="95"/>
        <end position="96"/>
    </location>
</feature>
<proteinExistence type="inferred from homology"/>
<sequence>MAIQESKQIQVLRFIHEAQLNNGYPPTVREVGEAVGLSSSSTIHGHIERLVKKGYLLKDASKPRARAIEVTDSGLEALGVSTTPGRIPVLGQVTAGAPILAVEEEATEFFPIPDNLMQFDGDMFMLNVRGNSMINIGILDGDKVIVRKQDNADNGDVVVAMNDDDEATVKRFFREADHFRLQPENDAMAPIILKQVAILGKVIGLYRDAIY</sequence>
<organism>
    <name type="scientific">Leuconostoc citreum (strain KM20)</name>
    <dbReference type="NCBI Taxonomy" id="349519"/>
    <lineage>
        <taxon>Bacteria</taxon>
        <taxon>Bacillati</taxon>
        <taxon>Bacillota</taxon>
        <taxon>Bacilli</taxon>
        <taxon>Lactobacillales</taxon>
        <taxon>Lactobacillaceae</taxon>
        <taxon>Leuconostoc</taxon>
    </lineage>
</organism>
<reference key="1">
    <citation type="journal article" date="2008" name="J. Bacteriol.">
        <title>Complete genome sequence of Leuconostoc citreum KM20.</title>
        <authorList>
            <person name="Kim J.F."/>
            <person name="Jeong H."/>
            <person name="Lee J.-S."/>
            <person name="Choi S.-H."/>
            <person name="Ha M."/>
            <person name="Hur C.-G."/>
            <person name="Kim J.-S."/>
            <person name="Lee S."/>
            <person name="Park H.-S."/>
            <person name="Park Y.-H."/>
            <person name="Oh T.K."/>
        </authorList>
    </citation>
    <scope>NUCLEOTIDE SEQUENCE [LARGE SCALE GENOMIC DNA]</scope>
    <source>
        <strain>KM20</strain>
    </source>
</reference>
<keyword id="KW-0068">Autocatalytic cleavage</keyword>
<keyword id="KW-0227">DNA damage</keyword>
<keyword id="KW-0234">DNA repair</keyword>
<keyword id="KW-0235">DNA replication</keyword>
<keyword id="KW-0238">DNA-binding</keyword>
<keyword id="KW-0378">Hydrolase</keyword>
<keyword id="KW-1185">Reference proteome</keyword>
<keyword id="KW-0678">Repressor</keyword>
<keyword id="KW-0742">SOS response</keyword>
<keyword id="KW-0804">Transcription</keyword>
<keyword id="KW-0805">Transcription regulation</keyword>
<accession>B1MZ70</accession>
<evidence type="ECO:0000255" key="1">
    <source>
        <dbReference type="HAMAP-Rule" id="MF_00015"/>
    </source>
</evidence>
<gene>
    <name evidence="1" type="primary">lexA</name>
    <name type="ordered locus">LCK_00995</name>
</gene>